<name>GDL50_ARATH</name>
<dbReference type="EC" id="3.1.1.-"/>
<dbReference type="EMBL" id="AC010927">
    <property type="protein sequence ID" value="AAF04430.1"/>
    <property type="status" value="ALT_SEQ"/>
    <property type="molecule type" value="Genomic_DNA"/>
</dbReference>
<dbReference type="EMBL" id="AC015985">
    <property type="protein sequence ID" value="AAF23243.1"/>
    <property type="molecule type" value="Genomic_DNA"/>
</dbReference>
<dbReference type="EMBL" id="CP002686">
    <property type="protein sequence ID" value="AEE74837.1"/>
    <property type="molecule type" value="Genomic_DNA"/>
</dbReference>
<dbReference type="EMBL" id="CP002686">
    <property type="protein sequence ID" value="ANM64288.1"/>
    <property type="molecule type" value="Genomic_DNA"/>
</dbReference>
<dbReference type="EMBL" id="BT003945">
    <property type="protein sequence ID" value="AAO41990.1"/>
    <property type="molecule type" value="mRNA"/>
</dbReference>
<dbReference type="RefSeq" id="NP_001326328.1">
    <property type="nucleotide sequence ID" value="NM_001337851.1"/>
</dbReference>
<dbReference type="RefSeq" id="NP_187604.1">
    <property type="nucleotide sequence ID" value="NM_111828.3"/>
</dbReference>
<dbReference type="SMR" id="Q9SF94"/>
<dbReference type="FunCoup" id="Q9SF94">
    <property type="interactions" value="144"/>
</dbReference>
<dbReference type="STRING" id="3702.Q9SF94"/>
<dbReference type="GlyGen" id="Q9SF94">
    <property type="glycosylation" value="5 sites"/>
</dbReference>
<dbReference type="PaxDb" id="3702-AT3G09930.1"/>
<dbReference type="ProteomicsDB" id="221978"/>
<dbReference type="EnsemblPlants" id="AT3G09930.1">
    <property type="protein sequence ID" value="AT3G09930.1"/>
    <property type="gene ID" value="AT3G09930"/>
</dbReference>
<dbReference type="EnsemblPlants" id="AT3G09930.2">
    <property type="protein sequence ID" value="AT3G09930.2"/>
    <property type="gene ID" value="AT3G09930"/>
</dbReference>
<dbReference type="GeneID" id="820154"/>
<dbReference type="Gramene" id="AT3G09930.1">
    <property type="protein sequence ID" value="AT3G09930.1"/>
    <property type="gene ID" value="AT3G09930"/>
</dbReference>
<dbReference type="Gramene" id="AT3G09930.2">
    <property type="protein sequence ID" value="AT3G09930.2"/>
    <property type="gene ID" value="AT3G09930"/>
</dbReference>
<dbReference type="KEGG" id="ath:AT3G09930"/>
<dbReference type="Araport" id="AT3G09930"/>
<dbReference type="TAIR" id="AT3G09930"/>
<dbReference type="eggNOG" id="ENOG502QU3Y">
    <property type="taxonomic scope" value="Eukaryota"/>
</dbReference>
<dbReference type="HOGENOM" id="CLU_015101_0_1_1"/>
<dbReference type="InParanoid" id="Q9SF94"/>
<dbReference type="OMA" id="VNAMRIH"/>
<dbReference type="OrthoDB" id="1600564at2759"/>
<dbReference type="PhylomeDB" id="Q9SF94"/>
<dbReference type="PRO" id="PR:Q9SF94"/>
<dbReference type="Proteomes" id="UP000006548">
    <property type="component" value="Chromosome 3"/>
</dbReference>
<dbReference type="ExpressionAtlas" id="Q9SF94">
    <property type="expression patterns" value="baseline and differential"/>
</dbReference>
<dbReference type="GO" id="GO:0005576">
    <property type="term" value="C:extracellular region"/>
    <property type="evidence" value="ECO:0007669"/>
    <property type="project" value="UniProtKB-SubCell"/>
</dbReference>
<dbReference type="GO" id="GO:0016788">
    <property type="term" value="F:hydrolase activity, acting on ester bonds"/>
    <property type="evidence" value="ECO:0007669"/>
    <property type="project" value="InterPro"/>
</dbReference>
<dbReference type="GO" id="GO:0016042">
    <property type="term" value="P:lipid catabolic process"/>
    <property type="evidence" value="ECO:0007669"/>
    <property type="project" value="UniProtKB-KW"/>
</dbReference>
<dbReference type="CDD" id="cd01837">
    <property type="entry name" value="SGNH_plant_lipase_like"/>
    <property type="match status" value="1"/>
</dbReference>
<dbReference type="Gene3D" id="3.40.50.1110">
    <property type="entry name" value="SGNH hydrolase"/>
    <property type="match status" value="1"/>
</dbReference>
<dbReference type="InterPro" id="IPR001087">
    <property type="entry name" value="GDSL"/>
</dbReference>
<dbReference type="InterPro" id="IPR036514">
    <property type="entry name" value="SGNH_hydro_sf"/>
</dbReference>
<dbReference type="InterPro" id="IPR035669">
    <property type="entry name" value="SGNH_plant_lipase-like"/>
</dbReference>
<dbReference type="PANTHER" id="PTHR46020:SF12">
    <property type="entry name" value="BNAANNG22470D PROTEIN"/>
    <property type="match status" value="1"/>
</dbReference>
<dbReference type="PANTHER" id="PTHR46020">
    <property type="entry name" value="OSJNBB0059K02.9 PROTEIN"/>
    <property type="match status" value="1"/>
</dbReference>
<dbReference type="Pfam" id="PF00657">
    <property type="entry name" value="Lipase_GDSL"/>
    <property type="match status" value="1"/>
</dbReference>
<dbReference type="SUPFAM" id="SSF52266">
    <property type="entry name" value="SGNH hydrolase"/>
    <property type="match status" value="1"/>
</dbReference>
<protein>
    <recommendedName>
        <fullName>GDSL esterase/lipase At3g09930</fullName>
        <ecNumber>3.1.1.-</ecNumber>
    </recommendedName>
    <alternativeName>
        <fullName>Extracellular lipase At3g09930</fullName>
    </alternativeName>
</protein>
<proteinExistence type="evidence at transcript level"/>
<organism>
    <name type="scientific">Arabidopsis thaliana</name>
    <name type="common">Mouse-ear cress</name>
    <dbReference type="NCBI Taxonomy" id="3702"/>
    <lineage>
        <taxon>Eukaryota</taxon>
        <taxon>Viridiplantae</taxon>
        <taxon>Streptophyta</taxon>
        <taxon>Embryophyta</taxon>
        <taxon>Tracheophyta</taxon>
        <taxon>Spermatophyta</taxon>
        <taxon>Magnoliopsida</taxon>
        <taxon>eudicotyledons</taxon>
        <taxon>Gunneridae</taxon>
        <taxon>Pentapetalae</taxon>
        <taxon>rosids</taxon>
        <taxon>malvids</taxon>
        <taxon>Brassicales</taxon>
        <taxon>Brassicaceae</taxon>
        <taxon>Camelineae</taxon>
        <taxon>Arabidopsis</taxon>
    </lineage>
</organism>
<reference key="1">
    <citation type="journal article" date="2000" name="Nature">
        <title>Sequence and analysis of chromosome 3 of the plant Arabidopsis thaliana.</title>
        <authorList>
            <person name="Salanoubat M."/>
            <person name="Lemcke K."/>
            <person name="Rieger M."/>
            <person name="Ansorge W."/>
            <person name="Unseld M."/>
            <person name="Fartmann B."/>
            <person name="Valle G."/>
            <person name="Bloecker H."/>
            <person name="Perez-Alonso M."/>
            <person name="Obermaier B."/>
            <person name="Delseny M."/>
            <person name="Boutry M."/>
            <person name="Grivell L.A."/>
            <person name="Mache R."/>
            <person name="Puigdomenech P."/>
            <person name="De Simone V."/>
            <person name="Choisne N."/>
            <person name="Artiguenave F."/>
            <person name="Robert C."/>
            <person name="Brottier P."/>
            <person name="Wincker P."/>
            <person name="Cattolico L."/>
            <person name="Weissenbach J."/>
            <person name="Saurin W."/>
            <person name="Quetier F."/>
            <person name="Schaefer M."/>
            <person name="Mueller-Auer S."/>
            <person name="Gabel C."/>
            <person name="Fuchs M."/>
            <person name="Benes V."/>
            <person name="Wurmbach E."/>
            <person name="Drzonek H."/>
            <person name="Erfle H."/>
            <person name="Jordan N."/>
            <person name="Bangert S."/>
            <person name="Wiedelmann R."/>
            <person name="Kranz H."/>
            <person name="Voss H."/>
            <person name="Holland R."/>
            <person name="Brandt P."/>
            <person name="Nyakatura G."/>
            <person name="Vezzi A."/>
            <person name="D'Angelo M."/>
            <person name="Pallavicini A."/>
            <person name="Toppo S."/>
            <person name="Simionati B."/>
            <person name="Conrad A."/>
            <person name="Hornischer K."/>
            <person name="Kauer G."/>
            <person name="Loehnert T.-H."/>
            <person name="Nordsiek G."/>
            <person name="Reichelt J."/>
            <person name="Scharfe M."/>
            <person name="Schoen O."/>
            <person name="Bargues M."/>
            <person name="Terol J."/>
            <person name="Climent J."/>
            <person name="Navarro P."/>
            <person name="Collado C."/>
            <person name="Perez-Perez A."/>
            <person name="Ottenwaelder B."/>
            <person name="Duchemin D."/>
            <person name="Cooke R."/>
            <person name="Laudie M."/>
            <person name="Berger-Llauro C."/>
            <person name="Purnelle B."/>
            <person name="Masuy D."/>
            <person name="de Haan M."/>
            <person name="Maarse A.C."/>
            <person name="Alcaraz J.-P."/>
            <person name="Cottet A."/>
            <person name="Casacuberta E."/>
            <person name="Monfort A."/>
            <person name="Argiriou A."/>
            <person name="Flores M."/>
            <person name="Liguori R."/>
            <person name="Vitale D."/>
            <person name="Mannhaupt G."/>
            <person name="Haase D."/>
            <person name="Schoof H."/>
            <person name="Rudd S."/>
            <person name="Zaccaria P."/>
            <person name="Mewes H.-W."/>
            <person name="Mayer K.F.X."/>
            <person name="Kaul S."/>
            <person name="Town C.D."/>
            <person name="Koo H.L."/>
            <person name="Tallon L.J."/>
            <person name="Jenkins J."/>
            <person name="Rooney T."/>
            <person name="Rizzo M."/>
            <person name="Walts A."/>
            <person name="Utterback T."/>
            <person name="Fujii C.Y."/>
            <person name="Shea T.P."/>
            <person name="Creasy T.H."/>
            <person name="Haas B."/>
            <person name="Maiti R."/>
            <person name="Wu D."/>
            <person name="Peterson J."/>
            <person name="Van Aken S."/>
            <person name="Pai G."/>
            <person name="Militscher J."/>
            <person name="Sellers P."/>
            <person name="Gill J.E."/>
            <person name="Feldblyum T.V."/>
            <person name="Preuss D."/>
            <person name="Lin X."/>
            <person name="Nierman W.C."/>
            <person name="Salzberg S.L."/>
            <person name="White O."/>
            <person name="Venter J.C."/>
            <person name="Fraser C.M."/>
            <person name="Kaneko T."/>
            <person name="Nakamura Y."/>
            <person name="Sato S."/>
            <person name="Kato T."/>
            <person name="Asamizu E."/>
            <person name="Sasamoto S."/>
            <person name="Kimura T."/>
            <person name="Idesawa K."/>
            <person name="Kawashima K."/>
            <person name="Kishida Y."/>
            <person name="Kiyokawa C."/>
            <person name="Kohara M."/>
            <person name="Matsumoto M."/>
            <person name="Matsuno A."/>
            <person name="Muraki A."/>
            <person name="Nakayama S."/>
            <person name="Nakazaki N."/>
            <person name="Shinpo S."/>
            <person name="Takeuchi C."/>
            <person name="Wada T."/>
            <person name="Watanabe A."/>
            <person name="Yamada M."/>
            <person name="Yasuda M."/>
            <person name="Tabata S."/>
        </authorList>
    </citation>
    <scope>NUCLEOTIDE SEQUENCE [LARGE SCALE GENOMIC DNA]</scope>
    <source>
        <strain>cv. Columbia</strain>
    </source>
</reference>
<reference key="2">
    <citation type="journal article" date="2017" name="Plant J.">
        <title>Araport11: a complete reannotation of the Arabidopsis thaliana reference genome.</title>
        <authorList>
            <person name="Cheng C.Y."/>
            <person name="Krishnakumar V."/>
            <person name="Chan A.P."/>
            <person name="Thibaud-Nissen F."/>
            <person name="Schobel S."/>
            <person name="Town C.D."/>
        </authorList>
    </citation>
    <scope>GENOME REANNOTATION</scope>
    <source>
        <strain>cv. Columbia</strain>
    </source>
</reference>
<reference key="3">
    <citation type="journal article" date="2003" name="Science">
        <title>Empirical analysis of transcriptional activity in the Arabidopsis genome.</title>
        <authorList>
            <person name="Yamada K."/>
            <person name="Lim J."/>
            <person name="Dale J.M."/>
            <person name="Chen H."/>
            <person name="Shinn P."/>
            <person name="Palm C.J."/>
            <person name="Southwick A.M."/>
            <person name="Wu H.C."/>
            <person name="Kim C.J."/>
            <person name="Nguyen M."/>
            <person name="Pham P.K."/>
            <person name="Cheuk R.F."/>
            <person name="Karlin-Newmann G."/>
            <person name="Liu S.X."/>
            <person name="Lam B."/>
            <person name="Sakano H."/>
            <person name="Wu T."/>
            <person name="Yu G."/>
            <person name="Miranda M."/>
            <person name="Quach H.L."/>
            <person name="Tripp M."/>
            <person name="Chang C.H."/>
            <person name="Lee J.M."/>
            <person name="Toriumi M.J."/>
            <person name="Chan M.M."/>
            <person name="Tang C.C."/>
            <person name="Onodera C.S."/>
            <person name="Deng J.M."/>
            <person name="Akiyama K."/>
            <person name="Ansari Y."/>
            <person name="Arakawa T."/>
            <person name="Banh J."/>
            <person name="Banno F."/>
            <person name="Bowser L."/>
            <person name="Brooks S.Y."/>
            <person name="Carninci P."/>
            <person name="Chao Q."/>
            <person name="Choy N."/>
            <person name="Enju A."/>
            <person name="Goldsmith A.D."/>
            <person name="Gurjal M."/>
            <person name="Hansen N.F."/>
            <person name="Hayashizaki Y."/>
            <person name="Johnson-Hopson C."/>
            <person name="Hsuan V.W."/>
            <person name="Iida K."/>
            <person name="Karnes M."/>
            <person name="Khan S."/>
            <person name="Koesema E."/>
            <person name="Ishida J."/>
            <person name="Jiang P.X."/>
            <person name="Jones T."/>
            <person name="Kawai J."/>
            <person name="Kamiya A."/>
            <person name="Meyers C."/>
            <person name="Nakajima M."/>
            <person name="Narusaka M."/>
            <person name="Seki M."/>
            <person name="Sakurai T."/>
            <person name="Satou M."/>
            <person name="Tamse R."/>
            <person name="Vaysberg M."/>
            <person name="Wallender E.K."/>
            <person name="Wong C."/>
            <person name="Yamamura Y."/>
            <person name="Yuan S."/>
            <person name="Shinozaki K."/>
            <person name="Davis R.W."/>
            <person name="Theologis A."/>
            <person name="Ecker J.R."/>
        </authorList>
    </citation>
    <scope>NUCLEOTIDE SEQUENCE [LARGE SCALE MRNA]</scope>
    <source>
        <strain>cv. Columbia</strain>
    </source>
</reference>
<reference key="4">
    <citation type="journal article" date="2004" name="Prog. Lipid Res.">
        <title>GDSL family of serine esterases/lipases.</title>
        <authorList>
            <person name="Akoh C.C."/>
            <person name="Lee G.-C."/>
            <person name="Liaw Y.-C."/>
            <person name="Huang T.-H."/>
            <person name="Shaw J.-F."/>
        </authorList>
    </citation>
    <scope>REVIEW</scope>
</reference>
<reference key="5">
    <citation type="journal article" date="2008" name="Pak. J. Biol. Sci.">
        <title>Sequence analysis of GDSL lipase gene family in Arabidopsis thaliana.</title>
        <authorList>
            <person name="Ling H."/>
        </authorList>
    </citation>
    <scope>GENE FAMILY</scope>
</reference>
<accession>Q9SF94</accession>
<accession>Q84WD5</accession>
<accession>Q9SR58</accession>
<evidence type="ECO:0000250" key="1"/>
<evidence type="ECO:0000255" key="2"/>
<evidence type="ECO:0000305" key="3"/>
<keyword id="KW-0325">Glycoprotein</keyword>
<keyword id="KW-0378">Hydrolase</keyword>
<keyword id="KW-0442">Lipid degradation</keyword>
<keyword id="KW-0443">Lipid metabolism</keyword>
<keyword id="KW-1185">Reference proteome</keyword>
<keyword id="KW-0964">Secreted</keyword>
<keyword id="KW-0732">Signal</keyword>
<gene>
    <name type="ordered locus">At3g09930</name>
    <name type="ORF">F8A24.1</name>
    <name type="ORF">T22K18.26</name>
</gene>
<comment type="subcellular location">
    <subcellularLocation>
        <location evidence="3">Secreted</location>
    </subcellularLocation>
</comment>
<comment type="similarity">
    <text evidence="3">Belongs to the 'GDSL' lipolytic enzyme family.</text>
</comment>
<comment type="sequence caution" evidence="3">
    <conflict type="erroneous gene model prediction">
        <sequence resource="EMBL-CDS" id="AAF04430"/>
    </conflict>
</comment>
<feature type="signal peptide" evidence="2">
    <location>
        <begin position="1"/>
        <end position="24"/>
    </location>
</feature>
<feature type="chain" id="PRO_0000367391" description="GDSL esterase/lipase At3g09930">
    <location>
        <begin position="25"/>
        <end position="354"/>
    </location>
</feature>
<feature type="active site" description="Nucleophile" evidence="1">
    <location>
        <position position="46"/>
    </location>
</feature>
<feature type="active site" evidence="1">
    <location>
        <position position="329"/>
    </location>
</feature>
<feature type="active site" evidence="1">
    <location>
        <position position="332"/>
    </location>
</feature>
<feature type="glycosylation site" description="N-linked (GlcNAc...) asparagine" evidence="2">
    <location>
        <position position="133"/>
    </location>
</feature>
<feature type="glycosylation site" description="N-linked (GlcNAc...) asparagine" evidence="2">
    <location>
        <position position="233"/>
    </location>
</feature>
<feature type="glycosylation site" description="N-linked (GlcNAc...) asparagine" evidence="2">
    <location>
        <position position="237"/>
    </location>
</feature>
<feature type="glycosylation site" description="N-linked (GlcNAc...) asparagine" evidence="2">
    <location>
        <position position="256"/>
    </location>
</feature>
<feature type="glycosylation site" description="N-linked (GlcNAc...) asparagine" evidence="2">
    <location>
        <position position="300"/>
    </location>
</feature>
<feature type="sequence conflict" description="In Ref. 3; AAO41990." evidence="3" ref="3">
    <original>P</original>
    <variation>H</variation>
    <location>
        <position position="27"/>
    </location>
</feature>
<feature type="sequence conflict" description="In Ref. 3; AAO41990." evidence="3" ref="3">
    <original>P</original>
    <variation>Q</variation>
    <location>
        <position position="260"/>
    </location>
</feature>
<sequence>MELPKLLISLFLFSFSSFFLGAESDYPQHSNLKRLRPNRLFVFGDSYADTGNIRKSLSDSWKIPYGITFPQKPSGRFSDGRVATDFLARYLGIKSPIPYTWKDYAGKERLLYGMNYAYGGTGVFKTKDNPLPNMTTQIDYFQRVLAAGNIYSPSDLPSSLALVSVAGNDYATFLALKRPLTELPAFMKQVVDQIAVNAMRIHKLGVNKIVIPSMQPLGCLPSITVFNSFQRCNATDNASTNLHNYLLHKAIARLNNETKPSTFVVLDHYNAFLTVFKNKGPEPGVSRFGNPLKPCCVGVNSSYDCSNVDEKGEKKYIICEDPKAAFFWDIFHPSEEGWRSVYSVLHKHLKAIWI</sequence>